<organismHost>
    <name type="scientific">Nephotettix cincticeps</name>
    <name type="common">Green rice leafhopper</name>
    <name type="synonym">Selenocephalus cincticeps</name>
    <dbReference type="NCBI Taxonomy" id="94400"/>
</organismHost>
<organismHost>
    <name type="scientific">Oryza sativa</name>
    <name type="common">Rice</name>
    <dbReference type="NCBI Taxonomy" id="4530"/>
</organismHost>
<protein>
    <recommendedName>
        <fullName>Outer capsid protein P3</fullName>
    </recommendedName>
    <alternativeName>
        <fullName>Core protein P3</fullName>
    </alternativeName>
</protein>
<dbReference type="EMBL" id="D13774">
    <property type="protein sequence ID" value="BAA02917.1"/>
    <property type="molecule type" value="Genomic_RNA"/>
</dbReference>
<dbReference type="RefSeq" id="YP_001111368.1">
    <property type="nucleotide sequence ID" value="NC_009243.1"/>
</dbReference>
<dbReference type="SMR" id="Q86112"/>
<dbReference type="GeneID" id="4955109"/>
<dbReference type="KEGG" id="vg:4955109"/>
<dbReference type="OrthoDB" id="2769at10239"/>
<dbReference type="Proteomes" id="UP000006720">
    <property type="component" value="Genome"/>
</dbReference>
<dbReference type="GO" id="GO:0030430">
    <property type="term" value="C:host cell cytoplasm"/>
    <property type="evidence" value="ECO:0007669"/>
    <property type="project" value="UniProtKB-SubCell"/>
</dbReference>
<dbReference type="GO" id="GO:0039624">
    <property type="term" value="C:viral outer capsid"/>
    <property type="evidence" value="ECO:0007669"/>
    <property type="project" value="UniProtKB-KW"/>
</dbReference>
<dbReference type="GO" id="GO:0005198">
    <property type="term" value="F:structural molecule activity"/>
    <property type="evidence" value="ECO:0007669"/>
    <property type="project" value="InterPro"/>
</dbReference>
<dbReference type="InterPro" id="IPR016029">
    <property type="entry name" value="Inner_layer_core_VP3_Reovir"/>
</dbReference>
<dbReference type="InterPro" id="IPR015312">
    <property type="entry name" value="Innr_layr_core_VP3_Phytoreovir"/>
</dbReference>
<dbReference type="Pfam" id="PF09231">
    <property type="entry name" value="RDV-p3"/>
    <property type="match status" value="1"/>
</dbReference>
<dbReference type="SUPFAM" id="SSF56831">
    <property type="entry name" value="Reovirus inner layer core protein p3"/>
    <property type="match status" value="1"/>
</dbReference>
<organism>
    <name type="scientific">Rice gall dwarf virus</name>
    <name type="common">RGDV</name>
    <dbReference type="NCBI Taxonomy" id="10986"/>
    <lineage>
        <taxon>Viruses</taxon>
        <taxon>Riboviria</taxon>
        <taxon>Orthornavirae</taxon>
        <taxon>Duplornaviricota</taxon>
        <taxon>Resentoviricetes</taxon>
        <taxon>Reovirales</taxon>
        <taxon>Sedoreoviridae</taxon>
        <taxon>Phytoreovirus</taxon>
    </lineage>
</organism>
<sequence>MDVTGAPYSSGLNVRNVLLTESTSTFTPIETYNVQDDIRTIRISAKIAEESVVSRVPLPVSFKPISEITKLFDIIPISRGSTTSIVEHPQTSFMIKLRDNTFSDYACLDHLVAFEPALILHRLKMLFSILGKYASSIISEVPTLDVMIDNAQVTVIDMSKFDDRNMNTYADRLPRDIEVYAAKQDILKQYVRTSVNETPITFRDDLPMPVRERPTLYRRYIVPFTPVELSLYNMALQMLDLQYCHPLIVYKYLQDRAPPFLVVNDQIGLEMLSAGDGELLPRPVMEVLDYSLVYSSPLALNNLGSLLMSRIKTSIKVRSINEVSSSLSEIVNASSTVSNSASSAIANMNVAGVETIAAFIIRSVLNPNISYAMIGKLDLDAFNDFIYGTCLLLLQAITPPSAIAAMSRVRINNALAYFLLRYICPQPVYTRLLQNDVIPSLTNTLEWSSVDRDILAAIYSNLFVADGRIWNLVSRYYRELPPEEVTQVSVPARETSYGINETRGISLPYLFGDAITEMRPDNRLNDYKQRLNLPSRSPILIANPMRNNVVDLTNVNVKMDFIMDLYDQNNFLKSPAQWVRNSASNSALLAKFRDSVSNITGILENVLSNAYSNAVNTYCDSVYRAGVPLNWKYRVVIDPKDMMFVIFGVCPRYVLMGDSIPDFFAGSEDILILQLVRAIWEVMSNHMGNVPTRFFRMEDVQRDLSEMVSIVLSKKIDVTKYFTDDMRSTTFSKEAWERFIARQIGEELPPLYRTILDQVETINNYMEQMMSIMPIVDHFYVVRNSGIAARGSVNPILAATTLNLNQINTTMIIRDWSELVRLVMTQQRVDLNTSHSLFEAEFYKLSEIASNEFVRSNERGEAEPHFTDVEAIRINMYARYELKIYKEQGEFSKPTKLNKVMHEDLTSFVKSNIGKPYPPVFTIPIDIMLNDLGECTSTKTRMRSFKVDEYFKCFTGAQVIIPLDYVNLEHVGSIQDLQVMFNGSVSVRIKPWTIKENFDVNYVQTGNHEVLIDPLPNVLPI</sequence>
<accession>Q86112</accession>
<name>P3_RGDV</name>
<proteinExistence type="inferred from homology"/>
<comment type="function">
    <text>Capsid protein which self-assembles to form the inner icosahedral capsid with a T=2 symmetry, and consisting of 60 P3 dimers.</text>
</comment>
<comment type="subunit">
    <text evidence="1">Homodimer. Homomultimer.</text>
</comment>
<comment type="subcellular location">
    <subcellularLocation>
        <location evidence="2">Virion</location>
    </subcellularLocation>
    <subcellularLocation>
        <location evidence="1">Host cytoplasm</location>
    </subcellularLocation>
    <text evidence="1">Found in the interior of spherical cytoplasmic structures, called virus factories, that appear early after infection and are the site of viral replication and packaging.</text>
</comment>
<comment type="similarity">
    <text evidence="2">Belongs to the phytoreovirus inner capsid protein P3 family.</text>
</comment>
<keyword id="KW-0167">Capsid protein</keyword>
<keyword id="KW-1035">Host cytoplasm</keyword>
<keyword id="KW-1152">Outer capsid protein</keyword>
<keyword id="KW-1185">Reference proteome</keyword>
<keyword id="KW-0946">Virion</keyword>
<reference key="1">
    <citation type="journal article" date="1994" name="J. Gen. Virol.">
        <title>Conserved primary structures in core capsid proteins and reassembly of core particles and outer capsids between rice gall dwarf and rice dwarf phytoreoviruses.</title>
        <authorList>
            <person name="Takahashi Y."/>
            <person name="Tomiyama M."/>
            <person name="Hibino H."/>
            <person name="Omura T."/>
        </authorList>
    </citation>
    <scope>NUCLEOTIDE SEQUENCE [GENOMIC RNA]</scope>
</reference>
<evidence type="ECO:0000250" key="1"/>
<evidence type="ECO:0000305" key="2"/>
<feature type="chain" id="PRO_0000402403" description="Outer capsid protein P3">
    <location>
        <begin position="1"/>
        <end position="1021"/>
    </location>
</feature>